<keyword id="KW-0156">Chromatin regulator</keyword>
<keyword id="KW-0479">Metal-binding</keyword>
<keyword id="KW-0520">NAD</keyword>
<keyword id="KW-0539">Nucleus</keyword>
<keyword id="KW-1185">Reference proteome</keyword>
<keyword id="KW-0678">Repressor</keyword>
<keyword id="KW-0749">Sporulation</keyword>
<keyword id="KW-0804">Transcription</keyword>
<keyword id="KW-0805">Transcription regulation</keyword>
<keyword id="KW-0808">Transferase</keyword>
<keyword id="KW-0862">Zinc</keyword>
<reference key="1">
    <citation type="journal article" date="1995" name="Genes Dev.">
        <title>The SIR2 gene family, conserved from bacteria to humans, functions in silencing, cell cycle progression, and chromosome stability.</title>
        <authorList>
            <person name="Brachmann C.B."/>
            <person name="Sherman J.M."/>
            <person name="Devine S.E."/>
            <person name="Cameron E.E."/>
            <person name="Pillus L."/>
            <person name="Boeke J.D."/>
        </authorList>
    </citation>
    <scope>NUCLEOTIDE SEQUENCE [GENOMIC DNA]</scope>
    <source>
        <strain>S288c / YPH1</strain>
    </source>
</reference>
<reference key="2">
    <citation type="journal article" date="1996" name="Yeast">
        <title>HST1, a new member of the SIR2 family of genes.</title>
        <authorList>
            <person name="Derbyshire M.K."/>
            <person name="Weinstock K.G."/>
            <person name="Strathern J.N."/>
        </authorList>
    </citation>
    <scope>NUCLEOTIDE SEQUENCE [GENOMIC DNA]</scope>
    <source>
        <strain>GRY 668</strain>
    </source>
</reference>
<reference key="3">
    <citation type="journal article" date="1997" name="Yeast">
        <title>Sequence analysis of a 33.2 kb segment from the left arm of yeast chromosome XV reveals eight known genes and ten new open reading frames including homologues of ABC transporters, inositol phosphatases and human expressed sequence tags.</title>
        <authorList>
            <person name="Tzermia M."/>
            <person name="Katsoulou C."/>
            <person name="Alexandraki D."/>
        </authorList>
    </citation>
    <scope>NUCLEOTIDE SEQUENCE [GENOMIC DNA]</scope>
</reference>
<reference key="4">
    <citation type="journal article" date="1997" name="Nature">
        <title>The nucleotide sequence of Saccharomyces cerevisiae chromosome XV.</title>
        <authorList>
            <person name="Dujon B."/>
            <person name="Albermann K."/>
            <person name="Aldea M."/>
            <person name="Alexandraki D."/>
            <person name="Ansorge W."/>
            <person name="Arino J."/>
            <person name="Benes V."/>
            <person name="Bohn C."/>
            <person name="Bolotin-Fukuhara M."/>
            <person name="Bordonne R."/>
            <person name="Boyer J."/>
            <person name="Camasses A."/>
            <person name="Casamayor A."/>
            <person name="Casas C."/>
            <person name="Cheret G."/>
            <person name="Cziepluch C."/>
            <person name="Daignan-Fornier B."/>
            <person name="Dang V.-D."/>
            <person name="de Haan M."/>
            <person name="Delius H."/>
            <person name="Durand P."/>
            <person name="Fairhead C."/>
            <person name="Feldmann H."/>
            <person name="Gaillon L."/>
            <person name="Galisson F."/>
            <person name="Gamo F.-J."/>
            <person name="Gancedo C."/>
            <person name="Goffeau A."/>
            <person name="Goulding S.E."/>
            <person name="Grivell L.A."/>
            <person name="Habbig B."/>
            <person name="Hand N.J."/>
            <person name="Hani J."/>
            <person name="Hattenhorst U."/>
            <person name="Hebling U."/>
            <person name="Hernando Y."/>
            <person name="Herrero E."/>
            <person name="Heumann K."/>
            <person name="Hiesel R."/>
            <person name="Hilger F."/>
            <person name="Hofmann B."/>
            <person name="Hollenberg C.P."/>
            <person name="Hughes B."/>
            <person name="Jauniaux J.-C."/>
            <person name="Kalogeropoulos A."/>
            <person name="Katsoulou C."/>
            <person name="Kordes E."/>
            <person name="Lafuente M.J."/>
            <person name="Landt O."/>
            <person name="Louis E.J."/>
            <person name="Maarse A.C."/>
            <person name="Madania A."/>
            <person name="Mannhaupt G."/>
            <person name="Marck C."/>
            <person name="Martin R.P."/>
            <person name="Mewes H.-W."/>
            <person name="Michaux G."/>
            <person name="Paces V."/>
            <person name="Parle-McDermott A.G."/>
            <person name="Pearson B.M."/>
            <person name="Perrin A."/>
            <person name="Pettersson B."/>
            <person name="Poch O."/>
            <person name="Pohl T.M."/>
            <person name="Poirey R."/>
            <person name="Portetelle D."/>
            <person name="Pujol A."/>
            <person name="Purnelle B."/>
            <person name="Ramezani Rad M."/>
            <person name="Rechmann S."/>
            <person name="Schwager C."/>
            <person name="Schweizer M."/>
            <person name="Sor F."/>
            <person name="Sterky F."/>
            <person name="Tarassov I.A."/>
            <person name="Teodoru C."/>
            <person name="Tettelin H."/>
            <person name="Thierry A."/>
            <person name="Tobiasch E."/>
            <person name="Tzermia M."/>
            <person name="Uhlen M."/>
            <person name="Unseld M."/>
            <person name="Valens M."/>
            <person name="Vandenbol M."/>
            <person name="Vetter I."/>
            <person name="Vlcek C."/>
            <person name="Voet M."/>
            <person name="Volckaert G."/>
            <person name="Voss H."/>
            <person name="Wambutt R."/>
            <person name="Wedler H."/>
            <person name="Wiemann S."/>
            <person name="Winsor B."/>
            <person name="Wolfe K.H."/>
            <person name="Zollner A."/>
            <person name="Zumstein E."/>
            <person name="Kleine K."/>
        </authorList>
    </citation>
    <scope>NUCLEOTIDE SEQUENCE [LARGE SCALE GENOMIC DNA]</scope>
    <source>
        <strain>ATCC 204508 / S288c</strain>
    </source>
</reference>
<reference key="5">
    <citation type="journal article" date="2014" name="G3 (Bethesda)">
        <title>The reference genome sequence of Saccharomyces cerevisiae: Then and now.</title>
        <authorList>
            <person name="Engel S.R."/>
            <person name="Dietrich F.S."/>
            <person name="Fisk D.G."/>
            <person name="Binkley G."/>
            <person name="Balakrishnan R."/>
            <person name="Costanzo M.C."/>
            <person name="Dwight S.S."/>
            <person name="Hitz B.C."/>
            <person name="Karra K."/>
            <person name="Nash R.S."/>
            <person name="Weng S."/>
            <person name="Wong E.D."/>
            <person name="Lloyd P."/>
            <person name="Skrzypek M.S."/>
            <person name="Miyasato S.R."/>
            <person name="Simison M."/>
            <person name="Cherry J.M."/>
        </authorList>
    </citation>
    <scope>GENOME REANNOTATION</scope>
    <source>
        <strain>ATCC 204508 / S288c</strain>
    </source>
</reference>
<reference key="6">
    <citation type="journal article" date="1999" name="EMBO J.">
        <title>Sum1 and Hst1 repress middle sporulation-specific gene expression during mitosis in Saccharomyces cerevisiae.</title>
        <authorList>
            <person name="Xie J."/>
            <person name="Pierce M."/>
            <person name="Gailus-Durner V."/>
            <person name="Wagner M."/>
            <person name="Winter E."/>
            <person name="Vershon A.K."/>
        </authorList>
    </citation>
    <scope>FUNCTION</scope>
</reference>
<reference key="7">
    <citation type="journal article" date="2000" name="Proc. Natl. Acad. Sci. U.S.A.">
        <title>A phylogenetically conserved NAD+-dependent protein deacetylase activity in the Sir2 protein family.</title>
        <authorList>
            <person name="Smith J.S."/>
            <person name="Brachmann C.B."/>
            <person name="Celic I."/>
            <person name="Kenna M.A."/>
            <person name="Muhammad S."/>
            <person name="Starai V.J."/>
            <person name="Avalos J.L."/>
            <person name="Escalante-Semerena J.C."/>
            <person name="Grubmeyer C."/>
            <person name="Wolberger C."/>
            <person name="Boeke J.D."/>
        </authorList>
    </citation>
    <scope>ENZYME ACTIVITY</scope>
</reference>
<reference key="8">
    <citation type="journal article" date="2001" name="Genes Dev.">
        <title>The S. cerevisiae SET3 complex includes two histone deacetylases, Hos2 and Hst1, and is a meiotic-specific repressor of the sporulation gene program.</title>
        <authorList>
            <person name="Pijnappel W.W.M.P."/>
            <person name="Schaft D."/>
            <person name="Roguev A."/>
            <person name="Shevchenko A."/>
            <person name="Tekotte H."/>
            <person name="Wilm M."/>
            <person name="Rigaut G."/>
            <person name="Seraphin B."/>
            <person name="Aasland R."/>
            <person name="Stewart A.F."/>
        </authorList>
    </citation>
    <scope>IDENTIFICATION IN A COMPLEX WITH HOS2; SIF2; SNT1; CPR1; YIL112W AND SET3</scope>
</reference>
<reference key="9">
    <citation type="journal article" date="2003" name="Mol. Cell. Biol.">
        <title>Rfm1, a novel tethering factor required to recruit the hst1 histone deacetylase for repression of middle sporulation genes.</title>
        <authorList>
            <person name="McCord R."/>
            <person name="Pierce M."/>
            <person name="Xie J."/>
            <person name="Wonkatal S."/>
            <person name="Mickel C."/>
            <person name="Vershon A.K."/>
        </authorList>
    </citation>
    <scope>INTERACTION WITH RFM1</scope>
</reference>
<reference key="10">
    <citation type="journal article" date="2003" name="Mol. Cell. Biol.">
        <title>NAD+-dependent deacetylase Hst1p controls biosynthesis and cellular NAD+ levels in Saccharomyces cerevisiae.</title>
        <authorList>
            <person name="Bedalov A."/>
            <person name="Hirao M."/>
            <person name="Posakony J."/>
            <person name="Nelson M."/>
            <person name="Simon J.A."/>
        </authorList>
    </citation>
    <scope>FUNCTION</scope>
    <scope>ENZYME ACTIVITY</scope>
    <scope>BIOPHYSICOCHEMICAL PROPERTIES</scope>
</reference>
<reference key="11">
    <citation type="journal article" date="2003" name="Nature">
        <title>Global analysis of protein localization in budding yeast.</title>
        <authorList>
            <person name="Huh W.-K."/>
            <person name="Falvo J.V."/>
            <person name="Gerke L.C."/>
            <person name="Carroll A.S."/>
            <person name="Howson R.W."/>
            <person name="Weissman J.S."/>
            <person name="O'Shea E.K."/>
        </authorList>
    </citation>
    <scope>SUBCELLULAR LOCATION [LARGE SCALE ANALYSIS]</scope>
</reference>
<reference key="12">
    <citation type="journal article" date="2003" name="Nature">
        <title>Global analysis of protein expression in yeast.</title>
        <authorList>
            <person name="Ghaemmaghami S."/>
            <person name="Huh W.-K."/>
            <person name="Bower K."/>
            <person name="Howson R.W."/>
            <person name="Belle A."/>
            <person name="Dephoure N."/>
            <person name="O'Shea E.K."/>
            <person name="Weissman J.S."/>
        </authorList>
    </citation>
    <scope>LEVEL OF PROTEIN EXPRESSION [LARGE SCALE ANALYSIS]</scope>
</reference>
<accession>P53685</accession>
<accession>D6W1Z9</accession>
<comment type="function">
    <text evidence="3 7">NAD-dependent histone deacetylase involved in telomeric silencing. Histone deacetylase proteins act via the formation of large multiprotein complexes that are responsible for the deacetylation of lysine residues on the N-terminal part of the core histones (H2A, H2B, H3 and H4). Histone deacetylation gives a tag for epigenetic repression and plays an important role in transcriptional regulation, cell cycle progression and developmental events. Restores silencing at HMR in SIR2 mutants when overexpressed. Required to repress middle sporulation genes during vegetative growth. Acts as a sensor of NAD(+) levels and regulator of NAD(+) biosynthesis. Regulates the gene expression of de novo NAD(+) biosynthesis genes.</text>
</comment>
<comment type="catalytic activity">
    <reaction evidence="2 4 7">
        <text>N(6)-acetyl-L-lysyl-[protein] + NAD(+) + H2O = 2''-O-acetyl-ADP-D-ribose + nicotinamide + L-lysyl-[protein]</text>
        <dbReference type="Rhea" id="RHEA:43636"/>
        <dbReference type="Rhea" id="RHEA-COMP:9752"/>
        <dbReference type="Rhea" id="RHEA-COMP:10731"/>
        <dbReference type="ChEBI" id="CHEBI:15377"/>
        <dbReference type="ChEBI" id="CHEBI:17154"/>
        <dbReference type="ChEBI" id="CHEBI:29969"/>
        <dbReference type="ChEBI" id="CHEBI:57540"/>
        <dbReference type="ChEBI" id="CHEBI:61930"/>
        <dbReference type="ChEBI" id="CHEBI:83767"/>
        <dbReference type="EC" id="2.3.1.286"/>
    </reaction>
</comment>
<comment type="cofactor">
    <cofactor evidence="1">
        <name>Zn(2+)</name>
        <dbReference type="ChEBI" id="CHEBI:29105"/>
    </cofactor>
    <text evidence="1">Binds 1 zinc ion per subunit.</text>
</comment>
<comment type="biophysicochemical properties">
    <kinetics>
        <KM evidence="7">94.2 uM for NAD(+)</KM>
    </kinetics>
</comment>
<comment type="subunit">
    <text evidence="5 6">Identified in the Set3C complex with HOS2, SIF2, SNT1, CPR1, HOS4/YIL112W and SET3. Its presence is however not essential for meiotic repression by the Set3C complex. Interacts with SUM1 and RFM1. The interaction with SUM1 is mediated by RFM1.</text>
</comment>
<comment type="interaction">
    <interactant intactId="EBI-8691">
        <id>P53685</id>
    </interactant>
    <interactant intactId="EBI-15023">
        <id>Q12192</id>
        <label>RFM1</label>
    </interactant>
    <organismsDiffer>false</organismsDiffer>
    <experiments>2</experiments>
</comment>
<comment type="interaction">
    <interactant intactId="EBI-8691">
        <id>P53685</id>
    </interactant>
    <interactant intactId="EBI-17136">
        <id>P38262</id>
        <label>SIF2</label>
    </interactant>
    <organismsDiffer>false</organismsDiffer>
    <experiments>2</experiments>
</comment>
<comment type="interaction">
    <interactant intactId="EBI-8691">
        <id>P53685</id>
    </interactant>
    <interactant intactId="EBI-18547">
        <id>P46676</id>
        <label>SUM1</label>
    </interactant>
    <organismsDiffer>false</organismsDiffer>
    <experiments>2</experiments>
</comment>
<comment type="subcellular location">
    <subcellularLocation>
        <location evidence="8">Nucleus</location>
    </subcellularLocation>
    <text>But not nucleolar, and cytoplasmic.</text>
</comment>
<comment type="miscellaneous">
    <text evidence="9">Present with 1440 molecules/cell in log phase SD medium.</text>
</comment>
<comment type="similarity">
    <text evidence="10">Belongs to the sirtuin family. Class I subfamily.</text>
</comment>
<feature type="chain" id="PRO_0000110281" description="NAD-dependent protein deacetylase HST1">
    <location>
        <begin position="1"/>
        <end position="503"/>
    </location>
</feature>
<feature type="domain" description="Deacetylase sirtuin-type" evidence="2">
    <location>
        <begin position="183"/>
        <end position="468"/>
    </location>
</feature>
<feature type="active site" description="Proton acceptor" evidence="2">
    <location>
        <position position="310"/>
    </location>
</feature>
<feature type="binding site" evidence="1">
    <location>
        <begin position="208"/>
        <end position="227"/>
    </location>
    <ligand>
        <name>NAD(+)</name>
        <dbReference type="ChEBI" id="CHEBI:57540"/>
    </ligand>
</feature>
<feature type="binding site" evidence="1">
    <location>
        <begin position="290"/>
        <end position="293"/>
    </location>
    <ligand>
        <name>NAD(+)</name>
        <dbReference type="ChEBI" id="CHEBI:57540"/>
    </ligand>
</feature>
<feature type="binding site" evidence="2">
    <location>
        <position position="318"/>
    </location>
    <ligand>
        <name>Zn(2+)</name>
        <dbReference type="ChEBI" id="CHEBI:29105"/>
    </ligand>
</feature>
<feature type="binding site" evidence="2">
    <location>
        <position position="321"/>
    </location>
    <ligand>
        <name>Zn(2+)</name>
        <dbReference type="ChEBI" id="CHEBI:29105"/>
    </ligand>
</feature>
<feature type="binding site" evidence="2">
    <location>
        <position position="342"/>
    </location>
    <ligand>
        <name>Zn(2+)</name>
        <dbReference type="ChEBI" id="CHEBI:29105"/>
    </ligand>
</feature>
<feature type="binding site" evidence="2">
    <location>
        <position position="345"/>
    </location>
    <ligand>
        <name>Zn(2+)</name>
        <dbReference type="ChEBI" id="CHEBI:29105"/>
    </ligand>
</feature>
<feature type="binding site" evidence="1">
    <location>
        <begin position="412"/>
        <end position="414"/>
    </location>
    <ligand>
        <name>NAD(+)</name>
        <dbReference type="ChEBI" id="CHEBI:57540"/>
    </ligand>
</feature>
<feature type="binding site" evidence="1">
    <location>
        <begin position="437"/>
        <end position="439"/>
    </location>
    <ligand>
        <name>NAD(+)</name>
        <dbReference type="ChEBI" id="CHEBI:57540"/>
    </ligand>
</feature>
<feature type="binding site" evidence="1">
    <location>
        <position position="454"/>
    </location>
    <ligand>
        <name>NAD(+)</name>
        <dbReference type="ChEBI" id="CHEBI:57540"/>
    </ligand>
</feature>
<evidence type="ECO:0000250" key="1"/>
<evidence type="ECO:0000255" key="2">
    <source>
        <dbReference type="PROSITE-ProRule" id="PRU00236"/>
    </source>
</evidence>
<evidence type="ECO:0000269" key="3">
    <source>
    </source>
</evidence>
<evidence type="ECO:0000269" key="4">
    <source>
    </source>
</evidence>
<evidence type="ECO:0000269" key="5">
    <source>
    </source>
</evidence>
<evidence type="ECO:0000269" key="6">
    <source>
    </source>
</evidence>
<evidence type="ECO:0000269" key="7">
    <source>
    </source>
</evidence>
<evidence type="ECO:0000269" key="8">
    <source>
    </source>
</evidence>
<evidence type="ECO:0000269" key="9">
    <source>
    </source>
</evidence>
<evidence type="ECO:0000305" key="10"/>
<protein>
    <recommendedName>
        <fullName>NAD-dependent protein deacetylase HST1</fullName>
        <ecNumber evidence="2">2.3.1.286</ecNumber>
    </recommendedName>
    <alternativeName>
        <fullName>Homologous to SIR2 protein 1</fullName>
    </alternativeName>
    <alternativeName>
        <fullName>Regulatory protein SIR2 homolog 1</fullName>
    </alternativeName>
</protein>
<dbReference type="EC" id="2.3.1.286" evidence="2"/>
<dbReference type="EMBL" id="U39041">
    <property type="protein sequence ID" value="AAA81033.1"/>
    <property type="molecule type" value="Genomic_DNA"/>
</dbReference>
<dbReference type="EMBL" id="L47120">
    <property type="protein sequence ID" value="AAB38430.1"/>
    <property type="molecule type" value="Genomic_DNA"/>
</dbReference>
<dbReference type="EMBL" id="Z74810">
    <property type="protein sequence ID" value="CAA99078.1"/>
    <property type="molecule type" value="Genomic_DNA"/>
</dbReference>
<dbReference type="EMBL" id="BK006948">
    <property type="protein sequence ID" value="DAA10715.1"/>
    <property type="molecule type" value="Genomic_DNA"/>
</dbReference>
<dbReference type="PIR" id="S59698">
    <property type="entry name" value="S59698"/>
</dbReference>
<dbReference type="RefSeq" id="NP_014573.1">
    <property type="nucleotide sequence ID" value="NM_001183323.1"/>
</dbReference>
<dbReference type="SMR" id="P53685"/>
<dbReference type="BioGRID" id="34333">
    <property type="interactions" value="168"/>
</dbReference>
<dbReference type="ComplexPortal" id="CPX-1342">
    <property type="entry name" value="SET3C histone deacetylase complex"/>
</dbReference>
<dbReference type="ComplexPortal" id="CPX-1384">
    <property type="entry name" value="SUM1-RFM1-HST1 histone deacetylase complex"/>
</dbReference>
<dbReference type="DIP" id="DIP-6757N"/>
<dbReference type="FunCoup" id="P53685">
    <property type="interactions" value="191"/>
</dbReference>
<dbReference type="IntAct" id="P53685">
    <property type="interactions" value="8"/>
</dbReference>
<dbReference type="MINT" id="P53685"/>
<dbReference type="STRING" id="4932.YOL068C"/>
<dbReference type="iPTMnet" id="P53685"/>
<dbReference type="PaxDb" id="4932-YOL068C"/>
<dbReference type="PeptideAtlas" id="P53685"/>
<dbReference type="EnsemblFungi" id="YOL068C_mRNA">
    <property type="protein sequence ID" value="YOL068C"/>
    <property type="gene ID" value="YOL068C"/>
</dbReference>
<dbReference type="GeneID" id="854086"/>
<dbReference type="KEGG" id="sce:YOL068C"/>
<dbReference type="AGR" id="SGD:S000005429"/>
<dbReference type="SGD" id="S000005429">
    <property type="gene designation" value="HST1"/>
</dbReference>
<dbReference type="VEuPathDB" id="FungiDB:YOL068C"/>
<dbReference type="eggNOG" id="KOG2684">
    <property type="taxonomic scope" value="Eukaryota"/>
</dbReference>
<dbReference type="GeneTree" id="ENSGT00940000159406"/>
<dbReference type="HOGENOM" id="CLU_023643_5_0_1"/>
<dbReference type="InParanoid" id="P53685"/>
<dbReference type="OMA" id="FHKTIRK"/>
<dbReference type="OrthoDB" id="420264at2759"/>
<dbReference type="BioCyc" id="YEAST:G3O-33473-MONOMER"/>
<dbReference type="SABIO-RK" id="P53685"/>
<dbReference type="BioGRID-ORCS" id="854086">
    <property type="hits" value="0 hits in 10 CRISPR screens"/>
</dbReference>
<dbReference type="PRO" id="PR:P53685"/>
<dbReference type="Proteomes" id="UP000002311">
    <property type="component" value="Chromosome XV"/>
</dbReference>
<dbReference type="RNAct" id="P53685">
    <property type="molecule type" value="protein"/>
</dbReference>
<dbReference type="GO" id="GO:0000118">
    <property type="term" value="C:histone deacetylase complex"/>
    <property type="evidence" value="ECO:0000353"/>
    <property type="project" value="ComplexPortal"/>
</dbReference>
<dbReference type="GO" id="GO:0005634">
    <property type="term" value="C:nucleus"/>
    <property type="evidence" value="ECO:0000314"/>
    <property type="project" value="ComplexPortal"/>
</dbReference>
<dbReference type="GO" id="GO:0034967">
    <property type="term" value="C:Set3 complex"/>
    <property type="evidence" value="ECO:0000314"/>
    <property type="project" value="SGD"/>
</dbReference>
<dbReference type="GO" id="GO:0017136">
    <property type="term" value="F:histone deacetylase activity, NAD-dependent"/>
    <property type="evidence" value="ECO:0000314"/>
    <property type="project" value="SGD"/>
</dbReference>
<dbReference type="GO" id="GO:0046970">
    <property type="term" value="F:histone H4K16 deacetylase activity, NAD-dependent"/>
    <property type="evidence" value="ECO:0000318"/>
    <property type="project" value="GO_Central"/>
</dbReference>
<dbReference type="GO" id="GO:0046872">
    <property type="term" value="F:metal ion binding"/>
    <property type="evidence" value="ECO:0007669"/>
    <property type="project" value="UniProtKB-KW"/>
</dbReference>
<dbReference type="GO" id="GO:0070403">
    <property type="term" value="F:NAD+ binding"/>
    <property type="evidence" value="ECO:0000318"/>
    <property type="project" value="GO_Central"/>
</dbReference>
<dbReference type="GO" id="GO:0009267">
    <property type="term" value="P:cellular response to starvation"/>
    <property type="evidence" value="ECO:0000303"/>
    <property type="project" value="ComplexPortal"/>
</dbReference>
<dbReference type="GO" id="GO:0006974">
    <property type="term" value="P:DNA damage response"/>
    <property type="evidence" value="ECO:0000303"/>
    <property type="project" value="ComplexPortal"/>
</dbReference>
<dbReference type="GO" id="GO:0031507">
    <property type="term" value="P:heterochromatin formation"/>
    <property type="evidence" value="ECO:0000318"/>
    <property type="project" value="GO_Central"/>
</dbReference>
<dbReference type="GO" id="GO:0045835">
    <property type="term" value="P:negative regulation of meiotic nuclear division"/>
    <property type="evidence" value="ECO:0000314"/>
    <property type="project" value="ComplexPortal"/>
</dbReference>
<dbReference type="GO" id="GO:0045950">
    <property type="term" value="P:negative regulation of mitotic recombination"/>
    <property type="evidence" value="ECO:0000315"/>
    <property type="project" value="SGD"/>
</dbReference>
<dbReference type="GO" id="GO:0030174">
    <property type="term" value="P:regulation of DNA-templated DNA replication initiation"/>
    <property type="evidence" value="ECO:0000303"/>
    <property type="project" value="ComplexPortal"/>
</dbReference>
<dbReference type="GO" id="GO:0043937">
    <property type="term" value="P:regulation of sporulation"/>
    <property type="evidence" value="ECO:0000303"/>
    <property type="project" value="ComplexPortal"/>
</dbReference>
<dbReference type="GO" id="GO:0070623">
    <property type="term" value="P:regulation of thiamine biosynthetic process"/>
    <property type="evidence" value="ECO:0000315"/>
    <property type="project" value="CACAO"/>
</dbReference>
<dbReference type="GO" id="GO:0006357">
    <property type="term" value="P:regulation of transcription by RNA polymerase II"/>
    <property type="evidence" value="ECO:0000303"/>
    <property type="project" value="ComplexPortal"/>
</dbReference>
<dbReference type="GO" id="GO:0030466">
    <property type="term" value="P:silent mating-type cassette heterochromatin formation"/>
    <property type="evidence" value="ECO:0000315"/>
    <property type="project" value="SGD"/>
</dbReference>
<dbReference type="GO" id="GO:0030435">
    <property type="term" value="P:sporulation resulting in formation of a cellular spore"/>
    <property type="evidence" value="ECO:0007669"/>
    <property type="project" value="UniProtKB-KW"/>
</dbReference>
<dbReference type="CDD" id="cd01408">
    <property type="entry name" value="SIRT1"/>
    <property type="match status" value="1"/>
</dbReference>
<dbReference type="FunFam" id="1.20.120.1710:FF:000001">
    <property type="entry name" value="NAD-dependent histone deacetylase SIR2"/>
    <property type="match status" value="1"/>
</dbReference>
<dbReference type="Gene3D" id="1.20.120.1710">
    <property type="match status" value="1"/>
</dbReference>
<dbReference type="Gene3D" id="3.30.1600.10">
    <property type="entry name" value="SIR2/SIRT2 'Small Domain"/>
    <property type="match status" value="1"/>
</dbReference>
<dbReference type="Gene3D" id="3.40.50.1220">
    <property type="entry name" value="TPP-binding domain"/>
    <property type="match status" value="1"/>
</dbReference>
<dbReference type="InterPro" id="IPR029035">
    <property type="entry name" value="DHS-like_NAD/FAD-binding_dom"/>
</dbReference>
<dbReference type="InterPro" id="IPR007654">
    <property type="entry name" value="NAD-dep_histone_deAcase_SIR2_N"/>
</dbReference>
<dbReference type="InterPro" id="IPR050134">
    <property type="entry name" value="NAD-dep_sirtuin_deacylases"/>
</dbReference>
<dbReference type="InterPro" id="IPR003000">
    <property type="entry name" value="Sirtuin"/>
</dbReference>
<dbReference type="InterPro" id="IPR026591">
    <property type="entry name" value="Sirtuin_cat_small_dom_sf"/>
</dbReference>
<dbReference type="InterPro" id="IPR026590">
    <property type="entry name" value="Ssirtuin_cat_dom"/>
</dbReference>
<dbReference type="PANTHER" id="PTHR11085:SF9">
    <property type="entry name" value="NAD-DEPENDENT PROTEIN DEACETYLASE SIRTUIN-1"/>
    <property type="match status" value="1"/>
</dbReference>
<dbReference type="PANTHER" id="PTHR11085">
    <property type="entry name" value="NAD-DEPENDENT PROTEIN DEACYLASE SIRTUIN-5, MITOCHONDRIAL-RELATED"/>
    <property type="match status" value="1"/>
</dbReference>
<dbReference type="Pfam" id="PF04574">
    <property type="entry name" value="DUF592"/>
    <property type="match status" value="1"/>
</dbReference>
<dbReference type="Pfam" id="PF02146">
    <property type="entry name" value="SIR2"/>
    <property type="match status" value="1"/>
</dbReference>
<dbReference type="SUPFAM" id="SSF52467">
    <property type="entry name" value="DHS-like NAD/FAD-binding domain"/>
    <property type="match status" value="1"/>
</dbReference>
<dbReference type="PROSITE" id="PS50305">
    <property type="entry name" value="SIRTUIN"/>
    <property type="match status" value="1"/>
</dbReference>
<proteinExistence type="evidence at protein level"/>
<organism>
    <name type="scientific">Saccharomyces cerevisiae (strain ATCC 204508 / S288c)</name>
    <name type="common">Baker's yeast</name>
    <dbReference type="NCBI Taxonomy" id="559292"/>
    <lineage>
        <taxon>Eukaryota</taxon>
        <taxon>Fungi</taxon>
        <taxon>Dikarya</taxon>
        <taxon>Ascomycota</taxon>
        <taxon>Saccharomycotina</taxon>
        <taxon>Saccharomycetes</taxon>
        <taxon>Saccharomycetales</taxon>
        <taxon>Saccharomycetaceae</taxon>
        <taxon>Saccharomyces</taxon>
    </lineage>
</organism>
<name>HST1_YEAST</name>
<sequence>MNILLMQRIVSFILVVSQGRYFHVGELTMTMLKRPQEEESDNNATKKLKTRLTYPCILGKDKVTGKFIFPAITKDDVMNARLFLKDNDLKTFLEYFLPVEVNSIYIYFMIKLLGFDVKDKELFMALNSNITSNKERSSAELSSIHAKAEDEDELTDPLEKKHAVKLIKDLQKAINKVLSTRLRLPNFNTIDHFTATLRNAKKILVLTGAGVSTSLGIPDFRSSEGFYSKIRHLGLEDPQDVFNLDIFLQDPSVFYNIAHMVLPPENMYSPLHSFIKMLQDKGKLLRNYTQNIDNLESYAGIDPDKLVQCHGSFATASCVTCHWQIPGEKIFENIRNLELPLCPYCYQKRKQYFPMSNGNNTVQTNINFNSPILKSYGVLKPDMTFFGEALPSRFHKTIRKDILECDLLICIGTSLKVAPVSEIVNMVPSHVPQILINRDMVTHAEFDLNLLGFCDDVASLVAKKCHWDIPHKKWQDLKKIDYNCTEIDKGTYKIKKQPRKKQQ</sequence>
<gene>
    <name type="primary">HST1</name>
    <name type="ordered locus">YOL068C</name>
</gene>